<accession>Q6TDP4</accession>
<accession>Q5SV94</accession>
<organism>
    <name type="scientific">Homo sapiens</name>
    <name type="common">Human</name>
    <dbReference type="NCBI Taxonomy" id="9606"/>
    <lineage>
        <taxon>Eukaryota</taxon>
        <taxon>Metazoa</taxon>
        <taxon>Chordata</taxon>
        <taxon>Craniata</taxon>
        <taxon>Vertebrata</taxon>
        <taxon>Euteleostomi</taxon>
        <taxon>Mammalia</taxon>
        <taxon>Eutheria</taxon>
        <taxon>Euarchontoglires</taxon>
        <taxon>Primates</taxon>
        <taxon>Haplorrhini</taxon>
        <taxon>Catarrhini</taxon>
        <taxon>Hominidae</taxon>
        <taxon>Homo</taxon>
    </lineage>
</organism>
<dbReference type="EMBL" id="AY423763">
    <property type="protein sequence ID" value="AAR03710.1"/>
    <property type="molecule type" value="mRNA"/>
</dbReference>
<dbReference type="EMBL" id="AL645608">
    <property type="status" value="NOT_ANNOTATED_CDS"/>
    <property type="molecule type" value="Genomic_DNA"/>
</dbReference>
<dbReference type="CCDS" id="CCDS30550.1"/>
<dbReference type="RefSeq" id="NP_938073.1">
    <property type="nucleotide sequence ID" value="NM_198317.3"/>
</dbReference>
<dbReference type="PDB" id="6HRL">
    <property type="method" value="X-ray"/>
    <property type="resolution" value="2.60 A"/>
    <property type="chains" value="A/B=339-625"/>
</dbReference>
<dbReference type="PDBsum" id="6HRL"/>
<dbReference type="SMR" id="Q6TDP4"/>
<dbReference type="BioGRID" id="130885">
    <property type="interactions" value="20"/>
</dbReference>
<dbReference type="ComplexPortal" id="CPX-8103">
    <property type="entry name" value="CRL3 E3 ubiquitin ligase complex, KLHL17 variant"/>
</dbReference>
<dbReference type="FunCoup" id="Q6TDP4">
    <property type="interactions" value="126"/>
</dbReference>
<dbReference type="IntAct" id="Q6TDP4">
    <property type="interactions" value="18"/>
</dbReference>
<dbReference type="STRING" id="9606.ENSP00000343930"/>
<dbReference type="GlyGen" id="Q6TDP4">
    <property type="glycosylation" value="1 site, 1 O-linked glycan (1 site)"/>
</dbReference>
<dbReference type="iPTMnet" id="Q6TDP4"/>
<dbReference type="PhosphoSitePlus" id="Q6TDP4"/>
<dbReference type="BioMuta" id="KLHL17"/>
<dbReference type="DMDM" id="52783052"/>
<dbReference type="jPOST" id="Q6TDP4"/>
<dbReference type="MassIVE" id="Q6TDP4"/>
<dbReference type="PaxDb" id="9606-ENSP00000343930"/>
<dbReference type="PeptideAtlas" id="Q6TDP4"/>
<dbReference type="ProteomicsDB" id="67385"/>
<dbReference type="Antibodypedia" id="26039">
    <property type="antibodies" value="16 antibodies from 10 providers"/>
</dbReference>
<dbReference type="DNASU" id="339451"/>
<dbReference type="Ensembl" id="ENST00000338591.8">
    <property type="protein sequence ID" value="ENSP00000343930.3"/>
    <property type="gene ID" value="ENSG00000187961.15"/>
</dbReference>
<dbReference type="GeneID" id="339451"/>
<dbReference type="KEGG" id="hsa:339451"/>
<dbReference type="MANE-Select" id="ENST00000338591.8">
    <property type="protein sequence ID" value="ENSP00000343930.3"/>
    <property type="RefSeq nucleotide sequence ID" value="NM_198317.3"/>
    <property type="RefSeq protein sequence ID" value="NP_938073.1"/>
</dbReference>
<dbReference type="UCSC" id="uc001aca.3">
    <property type="organism name" value="human"/>
</dbReference>
<dbReference type="AGR" id="HGNC:24023"/>
<dbReference type="CTD" id="339451"/>
<dbReference type="DisGeNET" id="339451"/>
<dbReference type="GeneCards" id="KLHL17"/>
<dbReference type="HGNC" id="HGNC:24023">
    <property type="gene designation" value="KLHL17"/>
</dbReference>
<dbReference type="HPA" id="ENSG00000187961">
    <property type="expression patterns" value="Low tissue specificity"/>
</dbReference>
<dbReference type="MIM" id="619262">
    <property type="type" value="gene"/>
</dbReference>
<dbReference type="neXtProt" id="NX_Q6TDP4"/>
<dbReference type="OpenTargets" id="ENSG00000187961"/>
<dbReference type="PharmGKB" id="PA134887396"/>
<dbReference type="VEuPathDB" id="HostDB:ENSG00000187961"/>
<dbReference type="eggNOG" id="KOG4441">
    <property type="taxonomic scope" value="Eukaryota"/>
</dbReference>
<dbReference type="GeneTree" id="ENSGT00940000157635"/>
<dbReference type="HOGENOM" id="CLU_004253_14_2_1"/>
<dbReference type="InParanoid" id="Q6TDP4"/>
<dbReference type="OMA" id="RRNCWEP"/>
<dbReference type="OrthoDB" id="45365at2759"/>
<dbReference type="PAN-GO" id="Q6TDP4">
    <property type="GO annotations" value="5 GO annotations based on evolutionary models"/>
</dbReference>
<dbReference type="PhylomeDB" id="Q6TDP4"/>
<dbReference type="TreeFam" id="TF329218"/>
<dbReference type="PathwayCommons" id="Q6TDP4"/>
<dbReference type="SignaLink" id="Q6TDP4"/>
<dbReference type="SIGNOR" id="Q6TDP4"/>
<dbReference type="UniPathway" id="UPA00143"/>
<dbReference type="BioGRID-ORCS" id="339451">
    <property type="hits" value="19 hits in 1193 CRISPR screens"/>
</dbReference>
<dbReference type="ChiTaRS" id="KLHL17">
    <property type="organism name" value="human"/>
</dbReference>
<dbReference type="GenomeRNAi" id="339451"/>
<dbReference type="Pharos" id="Q6TDP4">
    <property type="development level" value="Tdark"/>
</dbReference>
<dbReference type="PRO" id="PR:Q6TDP4"/>
<dbReference type="Proteomes" id="UP000005640">
    <property type="component" value="Chromosome 1"/>
</dbReference>
<dbReference type="RNAct" id="Q6TDP4">
    <property type="molecule type" value="protein"/>
</dbReference>
<dbReference type="Bgee" id="ENSG00000187961">
    <property type="expression patterns" value="Expressed in lower esophagus mucosa and 97 other cell types or tissues"/>
</dbReference>
<dbReference type="ExpressionAtlas" id="Q6TDP4">
    <property type="expression patterns" value="baseline and differential"/>
</dbReference>
<dbReference type="GO" id="GO:0015629">
    <property type="term" value="C:actin cytoskeleton"/>
    <property type="evidence" value="ECO:0000250"/>
    <property type="project" value="UniProtKB"/>
</dbReference>
<dbReference type="GO" id="GO:0031463">
    <property type="term" value="C:Cul3-RING ubiquitin ligase complex"/>
    <property type="evidence" value="ECO:0000318"/>
    <property type="project" value="GO_Central"/>
</dbReference>
<dbReference type="GO" id="GO:0005737">
    <property type="term" value="C:cytoplasm"/>
    <property type="evidence" value="ECO:0000318"/>
    <property type="project" value="GO_Central"/>
</dbReference>
<dbReference type="GO" id="GO:0005615">
    <property type="term" value="C:extracellular space"/>
    <property type="evidence" value="ECO:0007005"/>
    <property type="project" value="UniProtKB"/>
</dbReference>
<dbReference type="GO" id="GO:0014069">
    <property type="term" value="C:postsynaptic density"/>
    <property type="evidence" value="ECO:0007669"/>
    <property type="project" value="UniProtKB-SubCell"/>
</dbReference>
<dbReference type="GO" id="GO:0003779">
    <property type="term" value="F:actin binding"/>
    <property type="evidence" value="ECO:0007669"/>
    <property type="project" value="UniProtKB-KW"/>
</dbReference>
<dbReference type="GO" id="GO:0060090">
    <property type="term" value="F:molecular adaptor activity"/>
    <property type="evidence" value="ECO:0000250"/>
    <property type="project" value="UniProtKB"/>
</dbReference>
<dbReference type="GO" id="GO:1990756">
    <property type="term" value="F:ubiquitin-like ligase-substrate adaptor activity"/>
    <property type="evidence" value="ECO:0000318"/>
    <property type="project" value="GO_Central"/>
</dbReference>
<dbReference type="GO" id="GO:0030036">
    <property type="term" value="P:actin cytoskeleton organization"/>
    <property type="evidence" value="ECO:0000250"/>
    <property type="project" value="UniProtKB"/>
</dbReference>
<dbReference type="GO" id="GO:0043161">
    <property type="term" value="P:proteasome-mediated ubiquitin-dependent protein catabolic process"/>
    <property type="evidence" value="ECO:0000318"/>
    <property type="project" value="GO_Central"/>
</dbReference>
<dbReference type="GO" id="GO:0016567">
    <property type="term" value="P:protein ubiquitination"/>
    <property type="evidence" value="ECO:0007669"/>
    <property type="project" value="UniProtKB-UniPathway"/>
</dbReference>
<dbReference type="CDD" id="cd18456">
    <property type="entry name" value="BACK_KLHL17"/>
    <property type="match status" value="1"/>
</dbReference>
<dbReference type="CDD" id="cd18246">
    <property type="entry name" value="BTB_POZ_KLHL17_actinfilin"/>
    <property type="match status" value="1"/>
</dbReference>
<dbReference type="FunFam" id="1.25.40.420:FF:000001">
    <property type="entry name" value="Kelch-like family member 12"/>
    <property type="match status" value="1"/>
</dbReference>
<dbReference type="FunFam" id="2.120.10.80:FF:000019">
    <property type="entry name" value="Kelch-like family member 17"/>
    <property type="match status" value="1"/>
</dbReference>
<dbReference type="FunFam" id="2.120.10.80:FF:000029">
    <property type="entry name" value="Kelch-like family member 17"/>
    <property type="match status" value="1"/>
</dbReference>
<dbReference type="FunFam" id="3.30.710.10:FF:000001">
    <property type="entry name" value="Kelch-like family member 20"/>
    <property type="match status" value="1"/>
</dbReference>
<dbReference type="Gene3D" id="1.25.40.420">
    <property type="match status" value="1"/>
</dbReference>
<dbReference type="Gene3D" id="2.120.10.80">
    <property type="entry name" value="Kelch-type beta propeller"/>
    <property type="match status" value="2"/>
</dbReference>
<dbReference type="Gene3D" id="3.30.710.10">
    <property type="entry name" value="Potassium Channel Kv1.1, Chain A"/>
    <property type="match status" value="1"/>
</dbReference>
<dbReference type="InterPro" id="IPR011705">
    <property type="entry name" value="BACK"/>
</dbReference>
<dbReference type="InterPro" id="IPR017096">
    <property type="entry name" value="BTB-kelch_protein"/>
</dbReference>
<dbReference type="InterPro" id="IPR000210">
    <property type="entry name" value="BTB/POZ_dom"/>
</dbReference>
<dbReference type="InterPro" id="IPR011043">
    <property type="entry name" value="Gal_Oxase/kelch_b-propeller"/>
</dbReference>
<dbReference type="InterPro" id="IPR015915">
    <property type="entry name" value="Kelch-typ_b-propeller"/>
</dbReference>
<dbReference type="InterPro" id="IPR006652">
    <property type="entry name" value="Kelch_1"/>
</dbReference>
<dbReference type="InterPro" id="IPR011333">
    <property type="entry name" value="SKP1/BTB/POZ_sf"/>
</dbReference>
<dbReference type="PANTHER" id="PTHR24412">
    <property type="entry name" value="KELCH PROTEIN"/>
    <property type="match status" value="1"/>
</dbReference>
<dbReference type="PANTHER" id="PTHR24412:SF475">
    <property type="entry name" value="KELCH-LIKE PROTEIN 17"/>
    <property type="match status" value="1"/>
</dbReference>
<dbReference type="Pfam" id="PF07707">
    <property type="entry name" value="BACK"/>
    <property type="match status" value="1"/>
</dbReference>
<dbReference type="Pfam" id="PF00651">
    <property type="entry name" value="BTB"/>
    <property type="match status" value="1"/>
</dbReference>
<dbReference type="Pfam" id="PF01344">
    <property type="entry name" value="Kelch_1"/>
    <property type="match status" value="5"/>
</dbReference>
<dbReference type="PIRSF" id="PIRSF037037">
    <property type="entry name" value="Kelch-like_protein_gigaxonin"/>
    <property type="match status" value="1"/>
</dbReference>
<dbReference type="PRINTS" id="PR00501">
    <property type="entry name" value="KELCHREPEAT"/>
</dbReference>
<dbReference type="SMART" id="SM00875">
    <property type="entry name" value="BACK"/>
    <property type="match status" value="1"/>
</dbReference>
<dbReference type="SMART" id="SM00225">
    <property type="entry name" value="BTB"/>
    <property type="match status" value="1"/>
</dbReference>
<dbReference type="SMART" id="SM00612">
    <property type="entry name" value="Kelch"/>
    <property type="match status" value="6"/>
</dbReference>
<dbReference type="SUPFAM" id="SSF50965">
    <property type="entry name" value="Galactose oxidase, central domain"/>
    <property type="match status" value="1"/>
</dbReference>
<dbReference type="SUPFAM" id="SSF54695">
    <property type="entry name" value="POZ domain"/>
    <property type="match status" value="1"/>
</dbReference>
<dbReference type="PROSITE" id="PS50097">
    <property type="entry name" value="BTB"/>
    <property type="match status" value="1"/>
</dbReference>
<protein>
    <recommendedName>
        <fullName>Kelch-like protein 17</fullName>
    </recommendedName>
    <alternativeName>
        <fullName>Actinfilin</fullName>
    </alternativeName>
</protein>
<proteinExistence type="evidence at protein level"/>
<comment type="function">
    <text evidence="1">Substrate-recognition component of some cullin-RING-based BCR (BTB-CUL3-RBX1) E3 ubiquitin-protein ligase complexes. The BCR(KLHL17) complex mediates the ubiquitination and subsequent degradation of GLUR6. May play a role in the actin-based neuronal function (By similarity).</text>
</comment>
<comment type="pathway">
    <text>Protein modification; protein ubiquitination.</text>
</comment>
<comment type="subunit">
    <text evidence="1">Interacts with F-actin; the interaction disrupts the F-actin structures and leads to marked changes of neuronal morphology. Component of a complex, composed of PDZK1, SYNGAP1, KLHL17 and NMDA receptors. Interacts directly with PDZK1 (via PDZ1 domain); the interaction is important for integrity of actin cytoskeleton structures in neurons. Interacts with DLG4 and SYNGAP1. Interacts (via kelch repeats) with GRIK2 (via C-terminus); the interaction targets GRIK2 for degradation via ubiquitin-proteasome pathway. Interacts with GRIK1. Interacts with (via BTB domain) CUL3; the interaction regulates surface GRIK2 expression (By similarity).</text>
</comment>
<comment type="interaction">
    <interactant intactId="EBI-21328926">
        <id>Q6TDP4</id>
    </interactant>
    <interactant intactId="EBI-930964">
        <id>P54253</id>
        <label>ATXN1</label>
    </interactant>
    <organismsDiffer>false</organismsDiffer>
    <experiments>6</experiments>
</comment>
<comment type="interaction">
    <interactant intactId="EBI-21328926">
        <id>Q6TDP4</id>
    </interactant>
    <interactant intactId="EBI-21251460">
        <id>O60260-5</id>
        <label>PRKN</label>
    </interactant>
    <organismsDiffer>false</organismsDiffer>
    <experiments>3</experiments>
</comment>
<comment type="interaction">
    <interactant intactId="EBI-21328926">
        <id>Q6TDP4</id>
    </interactant>
    <interactant intactId="EBI-372899">
        <id>Q13148</id>
        <label>TARDBP</label>
    </interactant>
    <organismsDiffer>false</organismsDiffer>
    <experiments>3</experiments>
</comment>
<comment type="interaction">
    <interactant intactId="EBI-21328926">
        <id>Q6TDP4</id>
    </interactant>
    <interactant intactId="EBI-12157263">
        <id>P40337-2</id>
        <label>VHL</label>
    </interactant>
    <organismsDiffer>false</organismsDiffer>
    <experiments>3</experiments>
</comment>
<comment type="subcellular location">
    <subcellularLocation>
        <location evidence="2">Postsynaptic density</location>
    </subcellularLocation>
    <subcellularLocation>
        <location evidence="2">Synapse</location>
    </subcellularLocation>
</comment>
<sequence length="642" mass="69874">MQPRSERPAGRTQSPEHGSPGPGPEAPPPPPPQPPAPEAERTRPRQARPAAPMEGAVQLLSREGHSVAHNSKRHYHDAFVAMSRMRQRGLLCDIVLHVAAKEIRAHKVVLASCSPYFHAMFTNEMSESRQTHVTLHDIDPQALDQLVQFAYTAEIVVGEGNVQTLLPAASLLQLNGVRDACCKFLLSQLDPSNCLGIRGFADAHSCSDLLKAAHRYVLQHFVDVAKTEEFMLLPLKQVLELVSSDSLNVPSEEEVYRAVLSWVKHDVDARRQHVPRLMKCVRLPLLSRDFLLGHVDAESLVRHHPDCKDLLIEALKFHLLPEQRGVLGTSRTRPRRCEGAGPVLFAVGGGSLFAIHGDCEAYDTRTDRWHVVASMSTRRARVGVAAVGNRLYAVGGYDGTSDLATVESYDPVTNTWQPEVSMGTRRSCLGVAALHGLLYSAGGYDGASCLNSAERYDPLTGTWTSVAAMSTRRRYVRVATLDGNLYAVGGYDSSSHLATVEKYEPQVNVWSPVASMLSRRSSAGVAVLEGALYVAGGNDGTSCLNSVERYSPKAGAWESVAPMNIRRSTHDLVAMDGWLYAVGGNDGSSSLNSIEKYNPRTNKWVAASCMFTRRSSVGVAVLELLNFPPPSSPTLSVSSTSL</sequence>
<gene>
    <name type="primary">KLHL17</name>
    <name type="synonym">AF</name>
</gene>
<feature type="chain" id="PRO_0000119119" description="Kelch-like protein 17">
    <location>
        <begin position="1"/>
        <end position="642"/>
    </location>
</feature>
<feature type="domain" description="BTB" evidence="3">
    <location>
        <begin position="92"/>
        <end position="159"/>
    </location>
</feature>
<feature type="domain" description="BACK">
    <location>
        <begin position="194"/>
        <end position="296"/>
    </location>
</feature>
<feature type="repeat" description="Kelch 1">
    <location>
        <begin position="343"/>
        <end position="389"/>
    </location>
</feature>
<feature type="repeat" description="Kelch 2">
    <location>
        <begin position="390"/>
        <end position="436"/>
    </location>
</feature>
<feature type="repeat" description="Kelch 3">
    <location>
        <begin position="438"/>
        <end position="483"/>
    </location>
</feature>
<feature type="repeat" description="Kelch 4">
    <location>
        <begin position="484"/>
        <end position="530"/>
    </location>
</feature>
<feature type="repeat" description="Kelch 5">
    <location>
        <begin position="532"/>
        <end position="577"/>
    </location>
</feature>
<feature type="repeat" description="Kelch 6">
    <location>
        <begin position="578"/>
        <end position="624"/>
    </location>
</feature>
<feature type="region of interest" description="Disordered" evidence="4">
    <location>
        <begin position="1"/>
        <end position="53"/>
    </location>
</feature>
<feature type="region of interest" description="Interaction with F-actin" evidence="1">
    <location>
        <begin position="289"/>
        <end position="641"/>
    </location>
</feature>
<feature type="region of interest" description="Interaction with PDZK1" evidence="1">
    <location>
        <begin position="640"/>
        <end position="642"/>
    </location>
</feature>
<feature type="compositionally biased region" description="Pro residues" evidence="4">
    <location>
        <begin position="21"/>
        <end position="37"/>
    </location>
</feature>
<feature type="strand" evidence="5">
    <location>
        <begin position="341"/>
        <end position="347"/>
    </location>
</feature>
<feature type="strand" evidence="5">
    <location>
        <begin position="359"/>
        <end position="363"/>
    </location>
</feature>
<feature type="turn" evidence="5">
    <location>
        <begin position="364"/>
        <end position="367"/>
    </location>
</feature>
<feature type="strand" evidence="5">
    <location>
        <begin position="368"/>
        <end position="372"/>
    </location>
</feature>
<feature type="strand" evidence="5">
    <location>
        <begin position="383"/>
        <end position="387"/>
    </location>
</feature>
<feature type="strand" evidence="5">
    <location>
        <begin position="390"/>
        <end position="394"/>
    </location>
</feature>
<feature type="strand" evidence="5">
    <location>
        <begin position="406"/>
        <end position="410"/>
    </location>
</feature>
<feature type="turn" evidence="5">
    <location>
        <begin position="411"/>
        <end position="414"/>
    </location>
</feature>
<feature type="strand" evidence="5">
    <location>
        <begin position="415"/>
        <end position="419"/>
    </location>
</feature>
<feature type="strand" evidence="5">
    <location>
        <begin position="430"/>
        <end position="434"/>
    </location>
</feature>
<feature type="strand" evidence="5">
    <location>
        <begin position="437"/>
        <end position="441"/>
    </location>
</feature>
<feature type="strand" evidence="5">
    <location>
        <begin position="446"/>
        <end position="449"/>
    </location>
</feature>
<feature type="strand" evidence="5">
    <location>
        <begin position="453"/>
        <end position="457"/>
    </location>
</feature>
<feature type="turn" evidence="5">
    <location>
        <begin position="458"/>
        <end position="461"/>
    </location>
</feature>
<feature type="strand" evidence="5">
    <location>
        <begin position="462"/>
        <end position="466"/>
    </location>
</feature>
<feature type="strand" evidence="5">
    <location>
        <begin position="477"/>
        <end position="481"/>
    </location>
</feature>
<feature type="strand" evidence="5">
    <location>
        <begin position="484"/>
        <end position="491"/>
    </location>
</feature>
<feature type="strand" evidence="5">
    <location>
        <begin position="496"/>
        <end position="504"/>
    </location>
</feature>
<feature type="turn" evidence="5">
    <location>
        <begin position="505"/>
        <end position="508"/>
    </location>
</feature>
<feature type="strand" evidence="5">
    <location>
        <begin position="509"/>
        <end position="513"/>
    </location>
</feature>
<feature type="strand" evidence="5">
    <location>
        <begin position="524"/>
        <end position="528"/>
    </location>
</feature>
<feature type="strand" evidence="5">
    <location>
        <begin position="531"/>
        <end position="535"/>
    </location>
</feature>
<feature type="strand" evidence="5">
    <location>
        <begin position="540"/>
        <end position="543"/>
    </location>
</feature>
<feature type="strand" evidence="5">
    <location>
        <begin position="547"/>
        <end position="551"/>
    </location>
</feature>
<feature type="turn" evidence="5">
    <location>
        <begin position="552"/>
        <end position="555"/>
    </location>
</feature>
<feature type="strand" evidence="5">
    <location>
        <begin position="556"/>
        <end position="560"/>
    </location>
</feature>
<feature type="strand" evidence="5">
    <location>
        <begin position="571"/>
        <end position="575"/>
    </location>
</feature>
<feature type="strand" evidence="5">
    <location>
        <begin position="578"/>
        <end position="582"/>
    </location>
</feature>
<feature type="strand" evidence="5">
    <location>
        <begin position="587"/>
        <end position="590"/>
    </location>
</feature>
<feature type="strand" evidence="5">
    <location>
        <begin position="594"/>
        <end position="598"/>
    </location>
</feature>
<feature type="turn" evidence="5">
    <location>
        <begin position="599"/>
        <end position="602"/>
    </location>
</feature>
<feature type="strand" evidence="5">
    <location>
        <begin position="603"/>
        <end position="607"/>
    </location>
</feature>
<feature type="strand" evidence="5">
    <location>
        <begin position="618"/>
        <end position="624"/>
    </location>
</feature>
<name>KLH17_HUMAN</name>
<evidence type="ECO:0000250" key="1"/>
<evidence type="ECO:0000250" key="2">
    <source>
        <dbReference type="UniProtKB" id="Q8K430"/>
    </source>
</evidence>
<evidence type="ECO:0000255" key="3">
    <source>
        <dbReference type="PROSITE-ProRule" id="PRU00037"/>
    </source>
</evidence>
<evidence type="ECO:0000256" key="4">
    <source>
        <dbReference type="SAM" id="MobiDB-lite"/>
    </source>
</evidence>
<evidence type="ECO:0007829" key="5">
    <source>
        <dbReference type="PDB" id="6HRL"/>
    </source>
</evidence>
<keyword id="KW-0002">3D-structure</keyword>
<keyword id="KW-0009">Actin-binding</keyword>
<keyword id="KW-0880">Kelch repeat</keyword>
<keyword id="KW-1267">Proteomics identification</keyword>
<keyword id="KW-1185">Reference proteome</keyword>
<keyword id="KW-0677">Repeat</keyword>
<keyword id="KW-0770">Synapse</keyword>
<keyword id="KW-0833">Ubl conjugation pathway</keyword>
<reference key="1">
    <citation type="submission" date="2003-09" db="EMBL/GenBank/DDBJ databases">
        <authorList>
            <person name="Huang C.Q."/>
            <person name="Wu S.L."/>
            <person name="Shan Y.X."/>
        </authorList>
    </citation>
    <scope>NUCLEOTIDE SEQUENCE [MRNA]</scope>
</reference>
<reference key="2">
    <citation type="journal article" date="2006" name="Nature">
        <title>The DNA sequence and biological annotation of human chromosome 1.</title>
        <authorList>
            <person name="Gregory S.G."/>
            <person name="Barlow K.F."/>
            <person name="McLay K.E."/>
            <person name="Kaul R."/>
            <person name="Swarbreck D."/>
            <person name="Dunham A."/>
            <person name="Scott C.E."/>
            <person name="Howe K.L."/>
            <person name="Woodfine K."/>
            <person name="Spencer C.C.A."/>
            <person name="Jones M.C."/>
            <person name="Gillson C."/>
            <person name="Searle S."/>
            <person name="Zhou Y."/>
            <person name="Kokocinski F."/>
            <person name="McDonald L."/>
            <person name="Evans R."/>
            <person name="Phillips K."/>
            <person name="Atkinson A."/>
            <person name="Cooper R."/>
            <person name="Jones C."/>
            <person name="Hall R.E."/>
            <person name="Andrews T.D."/>
            <person name="Lloyd C."/>
            <person name="Ainscough R."/>
            <person name="Almeida J.P."/>
            <person name="Ambrose K.D."/>
            <person name="Anderson F."/>
            <person name="Andrew R.W."/>
            <person name="Ashwell R.I.S."/>
            <person name="Aubin K."/>
            <person name="Babbage A.K."/>
            <person name="Bagguley C.L."/>
            <person name="Bailey J."/>
            <person name="Beasley H."/>
            <person name="Bethel G."/>
            <person name="Bird C.P."/>
            <person name="Bray-Allen S."/>
            <person name="Brown J.Y."/>
            <person name="Brown A.J."/>
            <person name="Buckley D."/>
            <person name="Burton J."/>
            <person name="Bye J."/>
            <person name="Carder C."/>
            <person name="Chapman J.C."/>
            <person name="Clark S.Y."/>
            <person name="Clarke G."/>
            <person name="Clee C."/>
            <person name="Cobley V."/>
            <person name="Collier R.E."/>
            <person name="Corby N."/>
            <person name="Coville G.J."/>
            <person name="Davies J."/>
            <person name="Deadman R."/>
            <person name="Dunn M."/>
            <person name="Earthrowl M."/>
            <person name="Ellington A.G."/>
            <person name="Errington H."/>
            <person name="Frankish A."/>
            <person name="Frankland J."/>
            <person name="French L."/>
            <person name="Garner P."/>
            <person name="Garnett J."/>
            <person name="Gay L."/>
            <person name="Ghori M.R.J."/>
            <person name="Gibson R."/>
            <person name="Gilby L.M."/>
            <person name="Gillett W."/>
            <person name="Glithero R.J."/>
            <person name="Grafham D.V."/>
            <person name="Griffiths C."/>
            <person name="Griffiths-Jones S."/>
            <person name="Grocock R."/>
            <person name="Hammond S."/>
            <person name="Harrison E.S.I."/>
            <person name="Hart E."/>
            <person name="Haugen E."/>
            <person name="Heath P.D."/>
            <person name="Holmes S."/>
            <person name="Holt K."/>
            <person name="Howden P.J."/>
            <person name="Hunt A.R."/>
            <person name="Hunt S.E."/>
            <person name="Hunter G."/>
            <person name="Isherwood J."/>
            <person name="James R."/>
            <person name="Johnson C."/>
            <person name="Johnson D."/>
            <person name="Joy A."/>
            <person name="Kay M."/>
            <person name="Kershaw J.K."/>
            <person name="Kibukawa M."/>
            <person name="Kimberley A.M."/>
            <person name="King A."/>
            <person name="Knights A.J."/>
            <person name="Lad H."/>
            <person name="Laird G."/>
            <person name="Lawlor S."/>
            <person name="Leongamornlert D.A."/>
            <person name="Lloyd D.M."/>
            <person name="Loveland J."/>
            <person name="Lovell J."/>
            <person name="Lush M.J."/>
            <person name="Lyne R."/>
            <person name="Martin S."/>
            <person name="Mashreghi-Mohammadi M."/>
            <person name="Matthews L."/>
            <person name="Matthews N.S.W."/>
            <person name="McLaren S."/>
            <person name="Milne S."/>
            <person name="Mistry S."/>
            <person name="Moore M.J.F."/>
            <person name="Nickerson T."/>
            <person name="O'Dell C.N."/>
            <person name="Oliver K."/>
            <person name="Palmeiri A."/>
            <person name="Palmer S.A."/>
            <person name="Parker A."/>
            <person name="Patel D."/>
            <person name="Pearce A.V."/>
            <person name="Peck A.I."/>
            <person name="Pelan S."/>
            <person name="Phelps K."/>
            <person name="Phillimore B.J."/>
            <person name="Plumb R."/>
            <person name="Rajan J."/>
            <person name="Raymond C."/>
            <person name="Rouse G."/>
            <person name="Saenphimmachak C."/>
            <person name="Sehra H.K."/>
            <person name="Sheridan E."/>
            <person name="Shownkeen R."/>
            <person name="Sims S."/>
            <person name="Skuce C.D."/>
            <person name="Smith M."/>
            <person name="Steward C."/>
            <person name="Subramanian S."/>
            <person name="Sycamore N."/>
            <person name="Tracey A."/>
            <person name="Tromans A."/>
            <person name="Van Helmond Z."/>
            <person name="Wall M."/>
            <person name="Wallis J.M."/>
            <person name="White S."/>
            <person name="Whitehead S.L."/>
            <person name="Wilkinson J.E."/>
            <person name="Willey D.L."/>
            <person name="Williams H."/>
            <person name="Wilming L."/>
            <person name="Wray P.W."/>
            <person name="Wu Z."/>
            <person name="Coulson A."/>
            <person name="Vaudin M."/>
            <person name="Sulston J.E."/>
            <person name="Durbin R.M."/>
            <person name="Hubbard T."/>
            <person name="Wooster R."/>
            <person name="Dunham I."/>
            <person name="Carter N.P."/>
            <person name="McVean G."/>
            <person name="Ross M.T."/>
            <person name="Harrow J."/>
            <person name="Olson M.V."/>
            <person name="Beck S."/>
            <person name="Rogers J."/>
            <person name="Bentley D.R."/>
        </authorList>
    </citation>
    <scope>NUCLEOTIDE SEQUENCE [LARGE SCALE GENOMIC DNA]</scope>
</reference>